<gene>
    <name type="primary">SAC2</name>
    <name type="ordered locus">At3g14205</name>
    <name type="ORF">MAG2.20</name>
</gene>
<feature type="chain" id="PRO_0000421968" description="Phosphoinositide phosphatase SAC2">
    <location>
        <begin position="1"/>
        <end position="808"/>
    </location>
</feature>
<feature type="domain" description="SAC" evidence="2">
    <location>
        <begin position="158"/>
        <end position="551"/>
    </location>
</feature>
<feature type="region of interest" description="Disordered" evidence="3">
    <location>
        <begin position="429"/>
        <end position="476"/>
    </location>
</feature>
<feature type="short sequence motif" description="Phosphatase catalytic core">
    <location>
        <begin position="487"/>
        <end position="498"/>
    </location>
</feature>
<feature type="compositionally biased region" description="Basic and acidic residues" evidence="3">
    <location>
        <begin position="465"/>
        <end position="476"/>
    </location>
</feature>
<proteinExistence type="evidence at transcript level"/>
<reference key="1">
    <citation type="journal article" date="2003" name="Plant Physiol.">
        <title>The SAC domain-containing protein gene family in Arabidopsis.</title>
        <authorList>
            <person name="Zhong R."/>
            <person name="Ye Z.-H."/>
        </authorList>
    </citation>
    <scope>NUCLEOTIDE SEQUENCE [MRNA]</scope>
    <scope>GENE FAMILY</scope>
    <scope>DOMAIN</scope>
    <scope>TISSUE SPECIFICITY</scope>
</reference>
<reference key="2">
    <citation type="journal article" date="2000" name="DNA Res.">
        <title>Structural analysis of Arabidopsis thaliana chromosome 3. II. Sequence features of the 4,251,695 bp regions covered by 90 P1, TAC and BAC clones.</title>
        <authorList>
            <person name="Kaneko T."/>
            <person name="Katoh T."/>
            <person name="Sato S."/>
            <person name="Nakamura Y."/>
            <person name="Asamizu E."/>
            <person name="Tabata S."/>
        </authorList>
    </citation>
    <scope>NUCLEOTIDE SEQUENCE [LARGE SCALE GENOMIC DNA]</scope>
    <source>
        <strain>cv. Columbia</strain>
    </source>
</reference>
<reference key="3">
    <citation type="journal article" date="2017" name="Plant J.">
        <title>Araport11: a complete reannotation of the Arabidopsis thaliana reference genome.</title>
        <authorList>
            <person name="Cheng C.Y."/>
            <person name="Krishnakumar V."/>
            <person name="Chan A.P."/>
            <person name="Thibaud-Nissen F."/>
            <person name="Schobel S."/>
            <person name="Town C.D."/>
        </authorList>
    </citation>
    <scope>GENOME REANNOTATION</scope>
    <source>
        <strain>cv. Columbia</strain>
    </source>
</reference>
<reference key="4">
    <citation type="journal article" date="2003" name="Science">
        <title>Empirical analysis of transcriptional activity in the Arabidopsis genome.</title>
        <authorList>
            <person name="Yamada K."/>
            <person name="Lim J."/>
            <person name="Dale J.M."/>
            <person name="Chen H."/>
            <person name="Shinn P."/>
            <person name="Palm C.J."/>
            <person name="Southwick A.M."/>
            <person name="Wu H.C."/>
            <person name="Kim C.J."/>
            <person name="Nguyen M."/>
            <person name="Pham P.K."/>
            <person name="Cheuk R.F."/>
            <person name="Karlin-Newmann G."/>
            <person name="Liu S.X."/>
            <person name="Lam B."/>
            <person name="Sakano H."/>
            <person name="Wu T."/>
            <person name="Yu G."/>
            <person name="Miranda M."/>
            <person name="Quach H.L."/>
            <person name="Tripp M."/>
            <person name="Chang C.H."/>
            <person name="Lee J.M."/>
            <person name="Toriumi M.J."/>
            <person name="Chan M.M."/>
            <person name="Tang C.C."/>
            <person name="Onodera C.S."/>
            <person name="Deng J.M."/>
            <person name="Akiyama K."/>
            <person name="Ansari Y."/>
            <person name="Arakawa T."/>
            <person name="Banh J."/>
            <person name="Banno F."/>
            <person name="Bowser L."/>
            <person name="Brooks S.Y."/>
            <person name="Carninci P."/>
            <person name="Chao Q."/>
            <person name="Choy N."/>
            <person name="Enju A."/>
            <person name="Goldsmith A.D."/>
            <person name="Gurjal M."/>
            <person name="Hansen N.F."/>
            <person name="Hayashizaki Y."/>
            <person name="Johnson-Hopson C."/>
            <person name="Hsuan V.W."/>
            <person name="Iida K."/>
            <person name="Karnes M."/>
            <person name="Khan S."/>
            <person name="Koesema E."/>
            <person name="Ishida J."/>
            <person name="Jiang P.X."/>
            <person name="Jones T."/>
            <person name="Kawai J."/>
            <person name="Kamiya A."/>
            <person name="Meyers C."/>
            <person name="Nakajima M."/>
            <person name="Narusaka M."/>
            <person name="Seki M."/>
            <person name="Sakurai T."/>
            <person name="Satou M."/>
            <person name="Tamse R."/>
            <person name="Vaysberg M."/>
            <person name="Wallender E.K."/>
            <person name="Wong C."/>
            <person name="Yamamura Y."/>
            <person name="Yuan S."/>
            <person name="Shinozaki K."/>
            <person name="Davis R.W."/>
            <person name="Theologis A."/>
            <person name="Ecker J.R."/>
        </authorList>
    </citation>
    <scope>NUCLEOTIDE SEQUENCE [LARGE SCALE MRNA]</scope>
    <source>
        <strain>cv. Columbia</strain>
    </source>
</reference>
<sequence length="808" mass="91632">MAASERSIDKEVDMGSSFLQKFRLYETRSSFYMIGRDKNRTSWRVLKLDRTEPAEVNIYEDSTAYTEAECFETLRRIHEGNRSSGGLKFVTTCYGIIGFIRFLGPYYMLIITKRKKLGEICGHTVYGVAKSKIITIPHASVLSNVAYSKDEKRYKRLLCTVDLTKDFFFSYSYHIMHTLQRNLSNNVEGHTYYESMFVWNEYLTRRIRNNVKDCMWTVALVYGFFKQVKLSVSEKNFRLTLISRRSRHYAGTRYLKRGVNEKGRVANDVETEQIVFEEAQDGNPGRISSVVQNRGSIPLFWSQETSRLNIKPDIILSPKDPNFEATRLHFENLGRRYGNPIIILNLIKTREKRPRETILRAEFANAIRFINKGLSKEDRLRPLHWDLHKHSRKKGTNVLAILGRLATYALNLTSIFYCQLTPDLRGEGFQNQNPSTLENDDGECSTYDPPSKDETAPNLVVENGNDSKDAKEDQQKEVTMLQKGVLRTNCIDCLDRTNVAQYAYGLVAFGRQLHALGLTESTNIDLDNPLAEDLMGIYETMGDTLALQYGGSAAHNKIFCERRGQWRAATQSQEFFRTLQRYYSNAYMDAEKQDAINVFLGYFQPQSDKPALWELGSDQHYNAARFLANSVPETSRSTMKRSLSESSIISESSPAALGPVGRHGLAEKDEEVKGLSDSAPEISTSETAKIAASLSAPPPILEELGLDDILENDCFCCDGNGEQCTCAAFDMDWVSSSGNSCEDESCGRATVVRSFETIPESRKIESEICVVETVGSNSRKGNKEEEEAISGIPEGYVRWVMDEDGHFW</sequence>
<accession>Q94A27</accession>
<accession>Q9LJG4</accession>
<organism>
    <name type="scientific">Arabidopsis thaliana</name>
    <name type="common">Mouse-ear cress</name>
    <dbReference type="NCBI Taxonomy" id="3702"/>
    <lineage>
        <taxon>Eukaryota</taxon>
        <taxon>Viridiplantae</taxon>
        <taxon>Streptophyta</taxon>
        <taxon>Embryophyta</taxon>
        <taxon>Tracheophyta</taxon>
        <taxon>Spermatophyta</taxon>
        <taxon>Magnoliopsida</taxon>
        <taxon>eudicotyledons</taxon>
        <taxon>Gunneridae</taxon>
        <taxon>Pentapetalae</taxon>
        <taxon>rosids</taxon>
        <taxon>malvids</taxon>
        <taxon>Brassicales</taxon>
        <taxon>Brassicaceae</taxon>
        <taxon>Camelineae</taxon>
        <taxon>Arabidopsis</taxon>
    </lineage>
</organism>
<name>SAC2_ARATH</name>
<evidence type="ECO:0000250" key="1"/>
<evidence type="ECO:0000255" key="2">
    <source>
        <dbReference type="PROSITE-ProRule" id="PRU00183"/>
    </source>
</evidence>
<evidence type="ECO:0000256" key="3">
    <source>
        <dbReference type="SAM" id="MobiDB-lite"/>
    </source>
</evidence>
<evidence type="ECO:0000269" key="4">
    <source>
    </source>
</evidence>
<evidence type="ECO:0000305" key="5"/>
<comment type="function">
    <text evidence="1">The PI(3,5)P2 regulatory complex regulates both the synthesis and turnover of phosphatidylinositol 3,5-bisphosphate (PtdIns(3,5)P2).</text>
</comment>
<comment type="catalytic activity">
    <reaction>
        <text>a 1,2-diacyl-sn-glycero-3-phospho-(1D-myo-inositol-3,5-bisphosphate) + H2O = a 1,2-diacyl-sn-glycero-3-phospho-(1D-myo-inositol-3-phosphate) + phosphate</text>
        <dbReference type="Rhea" id="RHEA:32955"/>
        <dbReference type="ChEBI" id="CHEBI:15377"/>
        <dbReference type="ChEBI" id="CHEBI:43474"/>
        <dbReference type="ChEBI" id="CHEBI:57923"/>
        <dbReference type="ChEBI" id="CHEBI:58088"/>
    </reaction>
</comment>
<comment type="cofactor">
    <cofactor evidence="1">
        <name>Mg(2+)</name>
        <dbReference type="ChEBI" id="CHEBI:18420"/>
    </cofactor>
</comment>
<comment type="subunit">
    <text evidence="1">Component of the PI(3,5)P2 regulatory complex at least composed of ATG18, SAC/FIG4, FAB1 and VAC14.</text>
</comment>
<comment type="subcellular location">
    <subcellularLocation>
        <location evidence="1">Vacuole membrane</location>
        <topology evidence="1">Peripheral membrane protein</topology>
    </subcellularLocation>
</comment>
<comment type="tissue specificity">
    <text evidence="4">Ubiquitous with a higher level of expression in young seedlings than in other tissues.</text>
</comment>
<comment type="domain">
    <text evidence="1">The phosphatase catalytic core motif (or RXNCXDCLDRTN motif) from the SAC domain is found in metal-independent protein phosphatases and inositol polyphosphate phosphatases.</text>
</comment>
<comment type="sequence caution" evidence="5">
    <conflict type="erroneous gene model prediction">
        <sequence resource="EMBL-CDS" id="BAB02988"/>
    </conflict>
</comment>
<protein>
    <recommendedName>
        <fullName>Phosphoinositide phosphatase SAC2</fullName>
        <shortName>AtSAC2</shortName>
        <ecNumber>3.1.3.-</ecNumber>
    </recommendedName>
    <alternativeName>
        <fullName>Phosphatidylinositol 3,5-bisphosphate 5-phosphatase SAC2</fullName>
    </alternativeName>
    <alternativeName>
        <fullName>Protein SUPPRESSOR OF ACTIN 2</fullName>
    </alternativeName>
    <alternativeName>
        <fullName>SAC domain protein 2</fullName>
    </alternativeName>
</protein>
<dbReference type="EC" id="3.1.3.-"/>
<dbReference type="EMBL" id="AY227245">
    <property type="protein sequence ID" value="AAP49835.1"/>
    <property type="molecule type" value="mRNA"/>
</dbReference>
<dbReference type="EMBL" id="AP000600">
    <property type="protein sequence ID" value="BAB02988.1"/>
    <property type="status" value="ALT_SEQ"/>
    <property type="molecule type" value="Genomic_DNA"/>
</dbReference>
<dbReference type="EMBL" id="CP002686">
    <property type="protein sequence ID" value="AEE75486.1"/>
    <property type="molecule type" value="Genomic_DNA"/>
</dbReference>
<dbReference type="EMBL" id="AY050432">
    <property type="protein sequence ID" value="AAK91448.1"/>
    <property type="molecule type" value="mRNA"/>
</dbReference>
<dbReference type="EMBL" id="AY093999">
    <property type="protein sequence ID" value="AAM16260.1"/>
    <property type="molecule type" value="mRNA"/>
</dbReference>
<dbReference type="RefSeq" id="NP_566481.1">
    <property type="nucleotide sequence ID" value="NM_112277.4"/>
</dbReference>
<dbReference type="SMR" id="Q94A27"/>
<dbReference type="FunCoup" id="Q94A27">
    <property type="interactions" value="4081"/>
</dbReference>
<dbReference type="STRING" id="3702.Q94A27"/>
<dbReference type="iPTMnet" id="Q94A27"/>
<dbReference type="PaxDb" id="3702-AT3G14205.1"/>
<dbReference type="ProteomicsDB" id="232865"/>
<dbReference type="EnsemblPlants" id="AT3G14205.1">
    <property type="protein sequence ID" value="AT3G14205.1"/>
    <property type="gene ID" value="AT3G14205"/>
</dbReference>
<dbReference type="GeneID" id="820638"/>
<dbReference type="Gramene" id="AT3G14205.1">
    <property type="protein sequence ID" value="AT3G14205.1"/>
    <property type="gene ID" value="AT3G14205"/>
</dbReference>
<dbReference type="KEGG" id="ath:AT3G14205"/>
<dbReference type="Araport" id="AT3G14205"/>
<dbReference type="TAIR" id="AT3G14205">
    <property type="gene designation" value="SAC2"/>
</dbReference>
<dbReference type="eggNOG" id="KOG1888">
    <property type="taxonomic scope" value="Eukaryota"/>
</dbReference>
<dbReference type="HOGENOM" id="CLU_003016_4_2_1"/>
<dbReference type="InParanoid" id="Q94A27"/>
<dbReference type="OMA" id="SYHIMHT"/>
<dbReference type="PhylomeDB" id="Q94A27"/>
<dbReference type="BioCyc" id="ARA:AT3G14205-MONOMER"/>
<dbReference type="PRO" id="PR:Q94A27"/>
<dbReference type="Proteomes" id="UP000006548">
    <property type="component" value="Chromosome 3"/>
</dbReference>
<dbReference type="ExpressionAtlas" id="Q94A27">
    <property type="expression patterns" value="baseline and differential"/>
</dbReference>
<dbReference type="GO" id="GO:0005774">
    <property type="term" value="C:vacuolar membrane"/>
    <property type="evidence" value="ECO:0007669"/>
    <property type="project" value="UniProtKB-SubCell"/>
</dbReference>
<dbReference type="GO" id="GO:0043813">
    <property type="term" value="F:phosphatidylinositol-3,5-bisphosphate 5-phosphatase activity"/>
    <property type="evidence" value="ECO:0007669"/>
    <property type="project" value="InterPro"/>
</dbReference>
<dbReference type="GO" id="GO:0046856">
    <property type="term" value="P:phosphatidylinositol dephosphorylation"/>
    <property type="evidence" value="ECO:0007669"/>
    <property type="project" value="InterPro"/>
</dbReference>
<dbReference type="InterPro" id="IPR043573">
    <property type="entry name" value="Fig4-like"/>
</dbReference>
<dbReference type="InterPro" id="IPR002013">
    <property type="entry name" value="SAC_dom"/>
</dbReference>
<dbReference type="PANTHER" id="PTHR45738:SF8">
    <property type="entry name" value="PHOSPHOINOSITIDE PHOSPHATASE SAC2"/>
    <property type="match status" value="1"/>
</dbReference>
<dbReference type="PANTHER" id="PTHR45738">
    <property type="entry name" value="POLYPHOSPHOINOSITIDE PHOSPHATASE"/>
    <property type="match status" value="1"/>
</dbReference>
<dbReference type="Pfam" id="PF02383">
    <property type="entry name" value="Syja_N"/>
    <property type="match status" value="1"/>
</dbReference>
<dbReference type="PROSITE" id="PS50275">
    <property type="entry name" value="SAC"/>
    <property type="match status" value="1"/>
</dbReference>
<keyword id="KW-0378">Hydrolase</keyword>
<keyword id="KW-0472">Membrane</keyword>
<keyword id="KW-1185">Reference proteome</keyword>
<keyword id="KW-0926">Vacuole</keyword>